<comment type="function">
    <text evidence="1">May play a role in sucrose partitioning during seed development and in stress response.</text>
</comment>
<comment type="catalytic activity">
    <reaction evidence="3">
        <text>Hydrolysis of terminal non-reducing beta-D-fructofuranoside residues in beta-D-fructofuranosides.</text>
        <dbReference type="EC" id="3.2.1.26"/>
    </reaction>
</comment>
<comment type="subcellular location">
    <subcellularLocation>
        <location evidence="4">Secreted</location>
        <location evidence="4">Extracellular space</location>
        <location evidence="4">Apoplast</location>
    </subcellularLocation>
    <subcellularLocation>
        <location evidence="4">Secreted</location>
        <location evidence="4">Cell wall</location>
    </subcellularLocation>
    <text evidence="4">Associated to the cell wall.</text>
</comment>
<comment type="similarity">
    <text evidence="4">Belongs to the glycosyl hydrolase 32 family.</text>
</comment>
<evidence type="ECO:0000250" key="1"/>
<evidence type="ECO:0000255" key="2"/>
<evidence type="ECO:0000255" key="3">
    <source>
        <dbReference type="PROSITE-ProRule" id="PRU10067"/>
    </source>
</evidence>
<evidence type="ECO:0000305" key="4"/>
<proteinExistence type="evidence at transcript level"/>
<organism>
    <name type="scientific">Oryza sativa subsp. indica</name>
    <name type="common">Rice</name>
    <dbReference type="NCBI Taxonomy" id="39946"/>
    <lineage>
        <taxon>Eukaryota</taxon>
        <taxon>Viridiplantae</taxon>
        <taxon>Streptophyta</taxon>
        <taxon>Embryophyta</taxon>
        <taxon>Tracheophyta</taxon>
        <taxon>Spermatophyta</taxon>
        <taxon>Magnoliopsida</taxon>
        <taxon>Liliopsida</taxon>
        <taxon>Poales</taxon>
        <taxon>Poaceae</taxon>
        <taxon>BOP clade</taxon>
        <taxon>Oryzoideae</taxon>
        <taxon>Oryzeae</taxon>
        <taxon>Oryzinae</taxon>
        <taxon>Oryza</taxon>
        <taxon>Oryza sativa</taxon>
    </lineage>
</organism>
<feature type="signal peptide" evidence="2">
    <location>
        <begin position="1"/>
        <end position="22"/>
    </location>
</feature>
<feature type="chain" id="PRO_0000303010" description="Beta-fructofuranosidase, insoluble isoenzyme 1">
    <location>
        <begin position="23"/>
        <end position="577"/>
    </location>
</feature>
<feature type="active site" evidence="3">
    <location>
        <position position="63"/>
    </location>
</feature>
<feature type="glycosylation site" description="N-linked (GlcNAc...) asparagine" evidence="2">
    <location>
        <position position="158"/>
    </location>
</feature>
<feature type="glycosylation site" description="N-linked (GlcNAc...) asparagine" evidence="2">
    <location>
        <position position="183"/>
    </location>
</feature>
<feature type="glycosylation site" description="N-linked (GlcNAc...) asparagine" evidence="2">
    <location>
        <position position="333"/>
    </location>
</feature>
<feature type="sequence conflict" description="In Ref. 1; AAQ24869." evidence="4" ref="1">
    <original>R</original>
    <variation>L</variation>
    <location>
        <position position="212"/>
    </location>
</feature>
<feature type="sequence conflict" description="In Ref. 1; AAQ24869." evidence="4" ref="1">
    <original>K</original>
    <variation>T</variation>
    <location>
        <position position="375"/>
    </location>
</feature>
<feature type="sequence conflict" description="In Ref. 1; AAQ24869." evidence="4" ref="1">
    <original>S</original>
    <variation>F</variation>
    <location>
        <position position="384"/>
    </location>
</feature>
<keyword id="KW-0052">Apoplast</keyword>
<keyword id="KW-0134">Cell wall</keyword>
<keyword id="KW-0325">Glycoprotein</keyword>
<keyword id="KW-0326">Glycosidase</keyword>
<keyword id="KW-0378">Hydrolase</keyword>
<keyword id="KW-1185">Reference proteome</keyword>
<keyword id="KW-0964">Secreted</keyword>
<keyword id="KW-0732">Signal</keyword>
<reference key="1">
    <citation type="submission" date="2003-07" db="EMBL/GenBank/DDBJ databases">
        <title>Characterization of three rice cell wall invertase genes.</title>
        <authorList>
            <person name="Wang Y.-Q."/>
            <person name="Zhu Z."/>
        </authorList>
    </citation>
    <scope>NUCLEOTIDE SEQUENCE [MRNA]</scope>
    <source>
        <strain>cv. Minghui 86</strain>
    </source>
</reference>
<reference key="2">
    <citation type="journal article" date="2005" name="PLoS Biol.">
        <title>The genomes of Oryza sativa: a history of duplications.</title>
        <authorList>
            <person name="Yu J."/>
            <person name="Wang J."/>
            <person name="Lin W."/>
            <person name="Li S."/>
            <person name="Li H."/>
            <person name="Zhou J."/>
            <person name="Ni P."/>
            <person name="Dong W."/>
            <person name="Hu S."/>
            <person name="Zeng C."/>
            <person name="Zhang J."/>
            <person name="Zhang Y."/>
            <person name="Li R."/>
            <person name="Xu Z."/>
            <person name="Li S."/>
            <person name="Li X."/>
            <person name="Zheng H."/>
            <person name="Cong L."/>
            <person name="Lin L."/>
            <person name="Yin J."/>
            <person name="Geng J."/>
            <person name="Li G."/>
            <person name="Shi J."/>
            <person name="Liu J."/>
            <person name="Lv H."/>
            <person name="Li J."/>
            <person name="Wang J."/>
            <person name="Deng Y."/>
            <person name="Ran L."/>
            <person name="Shi X."/>
            <person name="Wang X."/>
            <person name="Wu Q."/>
            <person name="Li C."/>
            <person name="Ren X."/>
            <person name="Wang J."/>
            <person name="Wang X."/>
            <person name="Li D."/>
            <person name="Liu D."/>
            <person name="Zhang X."/>
            <person name="Ji Z."/>
            <person name="Zhao W."/>
            <person name="Sun Y."/>
            <person name="Zhang Z."/>
            <person name="Bao J."/>
            <person name="Han Y."/>
            <person name="Dong L."/>
            <person name="Ji J."/>
            <person name="Chen P."/>
            <person name="Wu S."/>
            <person name="Liu J."/>
            <person name="Xiao Y."/>
            <person name="Bu D."/>
            <person name="Tan J."/>
            <person name="Yang L."/>
            <person name="Ye C."/>
            <person name="Zhang J."/>
            <person name="Xu J."/>
            <person name="Zhou Y."/>
            <person name="Yu Y."/>
            <person name="Zhang B."/>
            <person name="Zhuang S."/>
            <person name="Wei H."/>
            <person name="Liu B."/>
            <person name="Lei M."/>
            <person name="Yu H."/>
            <person name="Li Y."/>
            <person name="Xu H."/>
            <person name="Wei S."/>
            <person name="He X."/>
            <person name="Fang L."/>
            <person name="Zhang Z."/>
            <person name="Zhang Y."/>
            <person name="Huang X."/>
            <person name="Su Z."/>
            <person name="Tong W."/>
            <person name="Li J."/>
            <person name="Tong Z."/>
            <person name="Li S."/>
            <person name="Ye J."/>
            <person name="Wang L."/>
            <person name="Fang L."/>
            <person name="Lei T."/>
            <person name="Chen C.-S."/>
            <person name="Chen H.-C."/>
            <person name="Xu Z."/>
            <person name="Li H."/>
            <person name="Huang H."/>
            <person name="Zhang F."/>
            <person name="Xu H."/>
            <person name="Li N."/>
            <person name="Zhao C."/>
            <person name="Li S."/>
            <person name="Dong L."/>
            <person name="Huang Y."/>
            <person name="Li L."/>
            <person name="Xi Y."/>
            <person name="Qi Q."/>
            <person name="Li W."/>
            <person name="Zhang B."/>
            <person name="Hu W."/>
            <person name="Zhang Y."/>
            <person name="Tian X."/>
            <person name="Jiao Y."/>
            <person name="Liang X."/>
            <person name="Jin J."/>
            <person name="Gao L."/>
            <person name="Zheng W."/>
            <person name="Hao B."/>
            <person name="Liu S.-M."/>
            <person name="Wang W."/>
            <person name="Yuan L."/>
            <person name="Cao M."/>
            <person name="McDermott J."/>
            <person name="Samudrala R."/>
            <person name="Wang J."/>
            <person name="Wong G.K.-S."/>
            <person name="Yang H."/>
        </authorList>
    </citation>
    <scope>NUCLEOTIDE SEQUENCE [LARGE SCALE GENOMIC DNA]</scope>
    <source>
        <strain>cv. 93-11</strain>
    </source>
</reference>
<sequence>MGTRLLALAPWLLLLLLQLAGASHVVHRSLEAEQAPSSVPASIVSPLLRTGYHFQPPMNWINDPNGPLYYKGWYHLFYQYNPKGAVWGNIVWAHSVSQDLINWIALEPAIKPDIPSDQYGCWSGSATILPDGTPAILYTGIDRPNINYQVQNIAFPKNASDPLLREWVKPAYNPVATPEPGMNATQFRDPTTAWYADGHWRMLVGGLKGARRGLAYLYRSRDFKTWVRAKHPLHSALTGMWECPDFFPLQAPGLQAGLDTSVPSSKYVLKNSLDLTRYDYYTVGIYNKVTERYVPDNPAGDYHRLRYDYGNFYASKTFFDPVKHRRILLGWANESDSVTYDKAKGWAGIHAIPRKVWLDPSGKQLLQWPIEELEKLRGKSVSVSDKVVKPGEHFQVTGLGTYQADVEVSLEVSGLEKAEALDPAFGDDAERLCGAKGADVRGGVVFGLWVLASAGLEEKTAVFFRVFKPAGHGAKPVVLMCTDPTKSSLSPDLYKPTFAGFVDTDISSGKISLRSLIDRSVVESFGAGGKTCILSRVYPSMAIGDKAHLYVFNNGEADIKISHLKAWEMKKPLMNGA</sequence>
<name>INV1_ORYSI</name>
<gene>
    <name type="primary">CIN1</name>
    <name type="ORF">OsI_007390</name>
</gene>
<protein>
    <recommendedName>
        <fullName>Beta-fructofuranosidase, insoluble isoenzyme 1</fullName>
        <ecNumber>3.2.1.26</ecNumber>
    </recommendedName>
    <alternativeName>
        <fullName>Cell wall beta-fructosidase 1</fullName>
    </alternativeName>
    <alternativeName>
        <fullName>Invertase 1</fullName>
    </alternativeName>
    <alternativeName>
        <fullName>OsCIN1</fullName>
    </alternativeName>
    <alternativeName>
        <fullName>Sucrose hydrolase 1</fullName>
    </alternativeName>
</protein>
<dbReference type="EC" id="3.2.1.26"/>
<dbReference type="EMBL" id="AY342319">
    <property type="protein sequence ID" value="AAQ24869.1"/>
    <property type="molecule type" value="mRNA"/>
</dbReference>
<dbReference type="EMBL" id="CM000127">
    <property type="protein sequence ID" value="EAY86157.1"/>
    <property type="molecule type" value="Genomic_DNA"/>
</dbReference>
<dbReference type="SMR" id="A2X5P7"/>
<dbReference type="STRING" id="39946.A2X5P7"/>
<dbReference type="CAZy" id="GH32">
    <property type="family name" value="Glycoside Hydrolase Family 32"/>
</dbReference>
<dbReference type="GlyCosmos" id="A2X5P7">
    <property type="glycosylation" value="3 sites, No reported glycans"/>
</dbReference>
<dbReference type="HOGENOM" id="CLU_001528_6_0_1"/>
<dbReference type="BRENDA" id="3.2.1.26">
    <property type="organism ID" value="4460"/>
</dbReference>
<dbReference type="Proteomes" id="UP000007015">
    <property type="component" value="Chromosome 2"/>
</dbReference>
<dbReference type="GO" id="GO:0048046">
    <property type="term" value="C:apoplast"/>
    <property type="evidence" value="ECO:0007669"/>
    <property type="project" value="UniProtKB-SubCell"/>
</dbReference>
<dbReference type="GO" id="GO:0004564">
    <property type="term" value="F:beta-fructofuranosidase activity"/>
    <property type="evidence" value="ECO:0007669"/>
    <property type="project" value="UniProtKB-EC"/>
</dbReference>
<dbReference type="GO" id="GO:0005975">
    <property type="term" value="P:carbohydrate metabolic process"/>
    <property type="evidence" value="ECO:0007669"/>
    <property type="project" value="InterPro"/>
</dbReference>
<dbReference type="CDD" id="cd18624">
    <property type="entry name" value="GH32_Fruct1-like"/>
    <property type="match status" value="1"/>
</dbReference>
<dbReference type="FunFam" id="2.115.10.20:FF:000001">
    <property type="entry name" value="Beta-fructofuranosidase, insoluble isoenzyme CWINV1"/>
    <property type="match status" value="1"/>
</dbReference>
<dbReference type="FunFam" id="2.60.120.560:FF:000002">
    <property type="entry name" value="Beta-fructofuranosidase, insoluble isoenzyme CWINV1"/>
    <property type="match status" value="1"/>
</dbReference>
<dbReference type="Gene3D" id="2.60.120.560">
    <property type="entry name" value="Exo-inulinase, domain 1"/>
    <property type="match status" value="1"/>
</dbReference>
<dbReference type="Gene3D" id="2.115.10.20">
    <property type="entry name" value="Glycosyl hydrolase domain, family 43"/>
    <property type="match status" value="1"/>
</dbReference>
<dbReference type="InterPro" id="IPR013320">
    <property type="entry name" value="ConA-like_dom_sf"/>
</dbReference>
<dbReference type="InterPro" id="IPR050551">
    <property type="entry name" value="Fructan_Metab_Enzymes"/>
</dbReference>
<dbReference type="InterPro" id="IPR001362">
    <property type="entry name" value="Glyco_hydro_32"/>
</dbReference>
<dbReference type="InterPro" id="IPR018053">
    <property type="entry name" value="Glyco_hydro_32_AS"/>
</dbReference>
<dbReference type="InterPro" id="IPR013189">
    <property type="entry name" value="Glyco_hydro_32_C"/>
</dbReference>
<dbReference type="InterPro" id="IPR013148">
    <property type="entry name" value="Glyco_hydro_32_N"/>
</dbReference>
<dbReference type="InterPro" id="IPR023296">
    <property type="entry name" value="Glyco_hydro_beta-prop_sf"/>
</dbReference>
<dbReference type="PANTHER" id="PTHR31953">
    <property type="entry name" value="BETA-FRUCTOFURANOSIDASE, INSOLUBLE ISOENZYME CWINV1-RELATED"/>
    <property type="match status" value="1"/>
</dbReference>
<dbReference type="Pfam" id="PF08244">
    <property type="entry name" value="Glyco_hydro_32C"/>
    <property type="match status" value="1"/>
</dbReference>
<dbReference type="Pfam" id="PF00251">
    <property type="entry name" value="Glyco_hydro_32N"/>
    <property type="match status" value="1"/>
</dbReference>
<dbReference type="SMART" id="SM00640">
    <property type="entry name" value="Glyco_32"/>
    <property type="match status" value="1"/>
</dbReference>
<dbReference type="SUPFAM" id="SSF75005">
    <property type="entry name" value="Arabinanase/levansucrase/invertase"/>
    <property type="match status" value="1"/>
</dbReference>
<dbReference type="SUPFAM" id="SSF49899">
    <property type="entry name" value="Concanavalin A-like lectins/glucanases"/>
    <property type="match status" value="1"/>
</dbReference>
<dbReference type="PROSITE" id="PS00609">
    <property type="entry name" value="GLYCOSYL_HYDROL_F32"/>
    <property type="match status" value="1"/>
</dbReference>
<accession>A2X5P7</accession>
<accession>Q6EU76</accession>
<accession>Q6VEF4</accession>
<accession>Q8S922</accession>